<keyword id="KW-0472">Membrane</keyword>
<keyword id="KW-1185">Reference proteome</keyword>
<keyword id="KW-0812">Transmembrane</keyword>
<keyword id="KW-1133">Transmembrane helix</keyword>
<name>RHLF_PANTR</name>
<organism>
    <name type="scientific">Pan troglodytes</name>
    <name type="common">Chimpanzee</name>
    <dbReference type="NCBI Taxonomy" id="9598"/>
    <lineage>
        <taxon>Eukaryota</taxon>
        <taxon>Metazoa</taxon>
        <taxon>Chordata</taxon>
        <taxon>Craniata</taxon>
        <taxon>Vertebrata</taxon>
        <taxon>Euteleostomi</taxon>
        <taxon>Mammalia</taxon>
        <taxon>Eutheria</taxon>
        <taxon>Euarchontoglires</taxon>
        <taxon>Primates</taxon>
        <taxon>Haplorrhini</taxon>
        <taxon>Catarrhini</taxon>
        <taxon>Hominidae</taxon>
        <taxon>Pan</taxon>
    </lineage>
</organism>
<sequence length="417" mass="45268">MSSKYPRSVRCCLPLCALTLEAALILLFYFFTHYDASLEDQKGLVASYQVGQDLTVMAAIGFGFLTSSFRRHSWSSVAFNLFMLALGVQWAILLDGFLSQFPPGKVVITLFSIRLATTSALSVLISAGAVLGYVNLVQLVVMVLVEVTALGTMRMVISNIFNTDYHMNMMHFYLFTAYFGVTVAWCLPKPLPDVKEDKDQIATIPSLSAMLGALFLWMFWPSFNSALLRSPIERKNAVFNTYYALAVSVVTAISGSSLAHPQGKISMTYVHSAVLAGGVAVGTSCHLIPSPWLAMVLGLVAGLISIGGAKCGPGCCNRVLGIPDSSVMHYNFSLLGLLGEIIYIVLVVRHTVWNGNGMIGFQVLLSMGELSLAIAIALTSGLLTGLLLNLKIWKAPHVAKYSDDQVFWKFPHLAVGF</sequence>
<reference key="1">
    <citation type="journal article" date="1994" name="Biochem. Genet.">
        <title>Molecular genetics of chimpanzee Rh-related genes: their relationship with the R-C-E-F blood group system, the chimpanzee counterpart of the human rhesus system.</title>
        <authorList>
            <person name="Salvignol I."/>
            <person name="Blancher A."/>
            <person name="Calvas P."/>
            <person name="Clayton J."/>
            <person name="Socha W.W."/>
            <person name="Colin Y."/>
            <person name="Ruffie J."/>
        </authorList>
    </citation>
    <scope>NUCLEOTIDE SEQUENCE [MRNA]</scope>
</reference>
<feature type="chain" id="PRO_0000168197" description="RH-like protein IIF">
    <location>
        <begin position="1"/>
        <end position="417"/>
    </location>
</feature>
<feature type="transmembrane region" description="Helical" evidence="1">
    <location>
        <begin position="12"/>
        <end position="32"/>
    </location>
</feature>
<feature type="transmembrane region" description="Helical" evidence="1">
    <location>
        <begin position="44"/>
        <end position="64"/>
    </location>
</feature>
<feature type="transmembrane region" description="Helical" evidence="1">
    <location>
        <begin position="77"/>
        <end position="97"/>
    </location>
</feature>
<feature type="transmembrane region" description="Helical" evidence="1">
    <location>
        <begin position="125"/>
        <end position="145"/>
    </location>
</feature>
<feature type="transmembrane region" description="Helical" evidence="1">
    <location>
        <begin position="172"/>
        <end position="192"/>
    </location>
</feature>
<feature type="transmembrane region" description="Helical" evidence="1">
    <location>
        <begin position="203"/>
        <end position="223"/>
    </location>
</feature>
<feature type="transmembrane region" description="Helical" evidence="1">
    <location>
        <begin position="238"/>
        <end position="258"/>
    </location>
</feature>
<feature type="transmembrane region" description="Helical" evidence="1">
    <location>
        <begin position="265"/>
        <end position="285"/>
    </location>
</feature>
<feature type="transmembrane region" description="Helical" evidence="1">
    <location>
        <begin position="287"/>
        <end position="307"/>
    </location>
</feature>
<feature type="transmembrane region" description="Helical" evidence="1">
    <location>
        <begin position="331"/>
        <end position="351"/>
    </location>
</feature>
<feature type="transmembrane region" description="Helical" evidence="1">
    <location>
        <begin position="358"/>
        <end position="378"/>
    </location>
</feature>
<evidence type="ECO:0000255" key="1"/>
<evidence type="ECO:0000305" key="2"/>
<comment type="function">
    <text>May be part of an oligomeric complex which is likely to have a transport or channel function in the erythrocyte membrane.</text>
</comment>
<comment type="subcellular location">
    <subcellularLocation>
        <location>Membrane</location>
        <topology>Multi-pass membrane protein</topology>
    </subcellularLocation>
</comment>
<comment type="similarity">
    <text evidence="2">Belongs to the ammonium transporter (TC 2.A.49) family. Rh subfamily.</text>
</comment>
<protein>
    <recommendedName>
        <fullName>RH-like protein IIF</fullName>
    </recommendedName>
    <alternativeName>
        <fullName>Rhesus-like protein IIF</fullName>
    </alternativeName>
</protein>
<proteinExistence type="evidence at transcript level"/>
<dbReference type="EMBL" id="L37048">
    <property type="protein sequence ID" value="AAA65622.1"/>
    <property type="molecule type" value="mRNA"/>
</dbReference>
<dbReference type="PIR" id="I37003">
    <property type="entry name" value="I37003"/>
</dbReference>
<dbReference type="RefSeq" id="NP_001123215.1">
    <property type="nucleotide sequence ID" value="NM_001129743.1"/>
</dbReference>
<dbReference type="SMR" id="Q28812"/>
<dbReference type="FunCoup" id="Q28812">
    <property type="interactions" value="56"/>
</dbReference>
<dbReference type="GeneID" id="456645"/>
<dbReference type="KEGG" id="ptr:456645"/>
<dbReference type="InParanoid" id="Q28812"/>
<dbReference type="Proteomes" id="UP000002277">
    <property type="component" value="Unplaced"/>
</dbReference>
<dbReference type="GO" id="GO:0005886">
    <property type="term" value="C:plasma membrane"/>
    <property type="evidence" value="ECO:0000318"/>
    <property type="project" value="GO_Central"/>
</dbReference>
<dbReference type="GO" id="GO:0008519">
    <property type="term" value="F:ammonium channel activity"/>
    <property type="evidence" value="ECO:0000318"/>
    <property type="project" value="GO_Central"/>
</dbReference>
<dbReference type="GO" id="GO:0097272">
    <property type="term" value="P:ammonium homeostasis"/>
    <property type="evidence" value="ECO:0000318"/>
    <property type="project" value="GO_Central"/>
</dbReference>
<dbReference type="GO" id="GO:0072488">
    <property type="term" value="P:ammonium transmembrane transport"/>
    <property type="evidence" value="ECO:0000318"/>
    <property type="project" value="GO_Central"/>
</dbReference>
<dbReference type="FunFam" id="1.10.3430.10:FF:000009">
    <property type="entry name" value="Blood group Rh(D) polypeptide"/>
    <property type="match status" value="1"/>
</dbReference>
<dbReference type="Gene3D" id="1.10.3430.10">
    <property type="entry name" value="Ammonium transporter AmtB like domains"/>
    <property type="match status" value="1"/>
</dbReference>
<dbReference type="InterPro" id="IPR029020">
    <property type="entry name" value="Ammonium/urea_transptr"/>
</dbReference>
<dbReference type="InterPro" id="IPR024041">
    <property type="entry name" value="NH4_transpt_AmtB-like_dom"/>
</dbReference>
<dbReference type="InterPro" id="IPR002229">
    <property type="entry name" value="RhesusRHD"/>
</dbReference>
<dbReference type="PANTHER" id="PTHR11730">
    <property type="entry name" value="AMMONIUM TRANSPORTER"/>
    <property type="match status" value="1"/>
</dbReference>
<dbReference type="PANTHER" id="PTHR11730:SF100">
    <property type="entry name" value="RH-LIKE PROTEIN IC"/>
    <property type="match status" value="1"/>
</dbReference>
<dbReference type="Pfam" id="PF00909">
    <property type="entry name" value="Ammonium_transp"/>
    <property type="match status" value="1"/>
</dbReference>
<dbReference type="PRINTS" id="PR00342">
    <property type="entry name" value="RHESUSRHD"/>
</dbReference>
<dbReference type="SUPFAM" id="SSF111352">
    <property type="entry name" value="Ammonium transporter"/>
    <property type="match status" value="1"/>
</dbReference>
<accession>Q28812</accession>